<comment type="function">
    <text evidence="1">Involved in urease metallocenter assembly. Binds nickel. Probably functions as a nickel donor during metallocenter assembly.</text>
</comment>
<comment type="subcellular location">
    <subcellularLocation>
        <location evidence="1">Cytoplasm</location>
    </subcellularLocation>
</comment>
<comment type="similarity">
    <text evidence="1">Belongs to the UreE family.</text>
</comment>
<keyword id="KW-0143">Chaperone</keyword>
<keyword id="KW-0963">Cytoplasm</keyword>
<keyword id="KW-0533">Nickel</keyword>
<keyword id="KW-0996">Nickel insertion</keyword>
<name>UREE_BACC1</name>
<reference key="1">
    <citation type="journal article" date="2004" name="Nucleic Acids Res.">
        <title>The genome sequence of Bacillus cereus ATCC 10987 reveals metabolic adaptations and a large plasmid related to Bacillus anthracis pXO1.</title>
        <authorList>
            <person name="Rasko D.A."/>
            <person name="Ravel J."/>
            <person name="Oekstad O.A."/>
            <person name="Helgason E."/>
            <person name="Cer R.Z."/>
            <person name="Jiang L."/>
            <person name="Shores K.A."/>
            <person name="Fouts D.E."/>
            <person name="Tourasse N.J."/>
            <person name="Angiuoli S.V."/>
            <person name="Kolonay J.F."/>
            <person name="Nelson W.C."/>
            <person name="Kolstoe A.-B."/>
            <person name="Fraser C.M."/>
            <person name="Read T.D."/>
        </authorList>
    </citation>
    <scope>NUCLEOTIDE SEQUENCE [LARGE SCALE GENOMIC DNA]</scope>
    <source>
        <strain>ATCC 10987 / NRS 248</strain>
    </source>
</reference>
<proteinExistence type="inferred from homology"/>
<protein>
    <recommendedName>
        <fullName evidence="1">Urease accessory protein UreE</fullName>
    </recommendedName>
</protein>
<sequence>MIIEKINNNVCNMDDFSNTKKHLDKILISSELLLKRVQKLYSESGFEIGVSLGSGETLKNGDILYEDENRIVYIEVLPEEVIVITPTSIKEMGIIAHNLGNRHLPAQFDEGCMILANDYLVEDLLKKEGVPYQKENRVLPKPFKHASHKHI</sequence>
<evidence type="ECO:0000255" key="1">
    <source>
        <dbReference type="HAMAP-Rule" id="MF_00822"/>
    </source>
</evidence>
<accession>Q733J7</accession>
<dbReference type="EMBL" id="AE017194">
    <property type="protein sequence ID" value="AAS42566.1"/>
    <property type="molecule type" value="Genomic_DNA"/>
</dbReference>
<dbReference type="SMR" id="Q733J7"/>
<dbReference type="KEGG" id="bca:BCE_3661"/>
<dbReference type="HOGENOM" id="CLU_093757_3_1_9"/>
<dbReference type="Proteomes" id="UP000002527">
    <property type="component" value="Chromosome"/>
</dbReference>
<dbReference type="GO" id="GO:0005737">
    <property type="term" value="C:cytoplasm"/>
    <property type="evidence" value="ECO:0007669"/>
    <property type="project" value="UniProtKB-SubCell"/>
</dbReference>
<dbReference type="GO" id="GO:0016151">
    <property type="term" value="F:nickel cation binding"/>
    <property type="evidence" value="ECO:0007669"/>
    <property type="project" value="UniProtKB-UniRule"/>
</dbReference>
<dbReference type="GO" id="GO:0051082">
    <property type="term" value="F:unfolded protein binding"/>
    <property type="evidence" value="ECO:0007669"/>
    <property type="project" value="UniProtKB-UniRule"/>
</dbReference>
<dbReference type="GO" id="GO:0006457">
    <property type="term" value="P:protein folding"/>
    <property type="evidence" value="ECO:0007669"/>
    <property type="project" value="InterPro"/>
</dbReference>
<dbReference type="GO" id="GO:0065003">
    <property type="term" value="P:protein-containing complex assembly"/>
    <property type="evidence" value="ECO:0007669"/>
    <property type="project" value="InterPro"/>
</dbReference>
<dbReference type="GO" id="GO:0019627">
    <property type="term" value="P:urea metabolic process"/>
    <property type="evidence" value="ECO:0007669"/>
    <property type="project" value="InterPro"/>
</dbReference>
<dbReference type="CDD" id="cd00571">
    <property type="entry name" value="UreE"/>
    <property type="match status" value="1"/>
</dbReference>
<dbReference type="Gene3D" id="2.60.260.20">
    <property type="entry name" value="Urease metallochaperone UreE, N-terminal domain"/>
    <property type="match status" value="1"/>
</dbReference>
<dbReference type="Gene3D" id="3.30.70.790">
    <property type="entry name" value="UreE, C-terminal domain"/>
    <property type="match status" value="1"/>
</dbReference>
<dbReference type="HAMAP" id="MF_00822">
    <property type="entry name" value="UreE"/>
    <property type="match status" value="1"/>
</dbReference>
<dbReference type="InterPro" id="IPR012406">
    <property type="entry name" value="UreE"/>
</dbReference>
<dbReference type="InterPro" id="IPR007864">
    <property type="entry name" value="UreE_C_dom"/>
</dbReference>
<dbReference type="InterPro" id="IPR004029">
    <property type="entry name" value="UreE_N"/>
</dbReference>
<dbReference type="InterPro" id="IPR036118">
    <property type="entry name" value="UreE_N_sf"/>
</dbReference>
<dbReference type="Pfam" id="PF05194">
    <property type="entry name" value="UreE_C"/>
    <property type="match status" value="1"/>
</dbReference>
<dbReference type="Pfam" id="PF02814">
    <property type="entry name" value="UreE_N"/>
    <property type="match status" value="1"/>
</dbReference>
<dbReference type="PIRSF" id="PIRSF036402">
    <property type="entry name" value="Ureas_acces_UreE"/>
    <property type="match status" value="1"/>
</dbReference>
<dbReference type="SMART" id="SM00988">
    <property type="entry name" value="UreE_N"/>
    <property type="match status" value="1"/>
</dbReference>
<dbReference type="SUPFAM" id="SSF69737">
    <property type="entry name" value="Urease metallochaperone UreE, C-terminal domain"/>
    <property type="match status" value="1"/>
</dbReference>
<dbReference type="SUPFAM" id="SSF69287">
    <property type="entry name" value="Urease metallochaperone UreE, N-terminal domain"/>
    <property type="match status" value="1"/>
</dbReference>
<organism>
    <name type="scientific">Bacillus cereus (strain ATCC 10987 / NRS 248)</name>
    <dbReference type="NCBI Taxonomy" id="222523"/>
    <lineage>
        <taxon>Bacteria</taxon>
        <taxon>Bacillati</taxon>
        <taxon>Bacillota</taxon>
        <taxon>Bacilli</taxon>
        <taxon>Bacillales</taxon>
        <taxon>Bacillaceae</taxon>
        <taxon>Bacillus</taxon>
        <taxon>Bacillus cereus group</taxon>
    </lineage>
</organism>
<gene>
    <name evidence="1" type="primary">ureE</name>
    <name type="ordered locus">BCE_3661</name>
</gene>
<feature type="chain" id="PRO_0000223399" description="Urease accessory protein UreE">
    <location>
        <begin position="1"/>
        <end position="151"/>
    </location>
</feature>